<dbReference type="EC" id="1.5.1.5" evidence="1"/>
<dbReference type="EC" id="3.5.4.9" evidence="1"/>
<dbReference type="EMBL" id="CP000359">
    <property type="protein sequence ID" value="ABF44816.1"/>
    <property type="molecule type" value="Genomic_DNA"/>
</dbReference>
<dbReference type="RefSeq" id="WP_011529658.1">
    <property type="nucleotide sequence ID" value="NC_008025.1"/>
</dbReference>
<dbReference type="SMR" id="Q1J118"/>
<dbReference type="STRING" id="319795.Dgeo_0514"/>
<dbReference type="KEGG" id="dge:Dgeo_0514"/>
<dbReference type="eggNOG" id="COG0190">
    <property type="taxonomic scope" value="Bacteria"/>
</dbReference>
<dbReference type="HOGENOM" id="CLU_034045_2_1_0"/>
<dbReference type="UniPathway" id="UPA00193"/>
<dbReference type="Proteomes" id="UP000002431">
    <property type="component" value="Chromosome"/>
</dbReference>
<dbReference type="GO" id="GO:0005829">
    <property type="term" value="C:cytosol"/>
    <property type="evidence" value="ECO:0007669"/>
    <property type="project" value="TreeGrafter"/>
</dbReference>
<dbReference type="GO" id="GO:0004477">
    <property type="term" value="F:methenyltetrahydrofolate cyclohydrolase activity"/>
    <property type="evidence" value="ECO:0007669"/>
    <property type="project" value="UniProtKB-UniRule"/>
</dbReference>
<dbReference type="GO" id="GO:0004488">
    <property type="term" value="F:methylenetetrahydrofolate dehydrogenase (NADP+) activity"/>
    <property type="evidence" value="ECO:0007669"/>
    <property type="project" value="UniProtKB-UniRule"/>
</dbReference>
<dbReference type="GO" id="GO:0000105">
    <property type="term" value="P:L-histidine biosynthetic process"/>
    <property type="evidence" value="ECO:0007669"/>
    <property type="project" value="UniProtKB-KW"/>
</dbReference>
<dbReference type="GO" id="GO:0009086">
    <property type="term" value="P:methionine biosynthetic process"/>
    <property type="evidence" value="ECO:0007669"/>
    <property type="project" value="UniProtKB-KW"/>
</dbReference>
<dbReference type="GO" id="GO:0006164">
    <property type="term" value="P:purine nucleotide biosynthetic process"/>
    <property type="evidence" value="ECO:0007669"/>
    <property type="project" value="UniProtKB-KW"/>
</dbReference>
<dbReference type="GO" id="GO:0035999">
    <property type="term" value="P:tetrahydrofolate interconversion"/>
    <property type="evidence" value="ECO:0007669"/>
    <property type="project" value="UniProtKB-UniRule"/>
</dbReference>
<dbReference type="CDD" id="cd01080">
    <property type="entry name" value="NAD_bind_m-THF_DH_Cyclohyd"/>
    <property type="match status" value="1"/>
</dbReference>
<dbReference type="FunFam" id="3.40.50.10860:FF:000005">
    <property type="entry name" value="C-1-tetrahydrofolate synthase, cytoplasmic, putative"/>
    <property type="match status" value="1"/>
</dbReference>
<dbReference type="Gene3D" id="3.40.50.10860">
    <property type="entry name" value="Leucine Dehydrogenase, chain A, domain 1"/>
    <property type="match status" value="1"/>
</dbReference>
<dbReference type="Gene3D" id="3.40.50.720">
    <property type="entry name" value="NAD(P)-binding Rossmann-like Domain"/>
    <property type="match status" value="1"/>
</dbReference>
<dbReference type="HAMAP" id="MF_01576">
    <property type="entry name" value="THF_DHG_CYH"/>
    <property type="match status" value="1"/>
</dbReference>
<dbReference type="InterPro" id="IPR046346">
    <property type="entry name" value="Aminoacid_DH-like_N_sf"/>
</dbReference>
<dbReference type="InterPro" id="IPR036291">
    <property type="entry name" value="NAD(P)-bd_dom_sf"/>
</dbReference>
<dbReference type="InterPro" id="IPR000672">
    <property type="entry name" value="THF_DH/CycHdrlase"/>
</dbReference>
<dbReference type="InterPro" id="IPR020630">
    <property type="entry name" value="THF_DH/CycHdrlase_cat_dom"/>
</dbReference>
<dbReference type="InterPro" id="IPR020631">
    <property type="entry name" value="THF_DH/CycHdrlase_NAD-bd_dom"/>
</dbReference>
<dbReference type="PANTHER" id="PTHR48099:SF5">
    <property type="entry name" value="C-1-TETRAHYDROFOLATE SYNTHASE, CYTOPLASMIC"/>
    <property type="match status" value="1"/>
</dbReference>
<dbReference type="PANTHER" id="PTHR48099">
    <property type="entry name" value="C-1-TETRAHYDROFOLATE SYNTHASE, CYTOPLASMIC-RELATED"/>
    <property type="match status" value="1"/>
</dbReference>
<dbReference type="Pfam" id="PF00763">
    <property type="entry name" value="THF_DHG_CYH"/>
    <property type="match status" value="1"/>
</dbReference>
<dbReference type="Pfam" id="PF02882">
    <property type="entry name" value="THF_DHG_CYH_C"/>
    <property type="match status" value="1"/>
</dbReference>
<dbReference type="PRINTS" id="PR00085">
    <property type="entry name" value="THFDHDRGNASE"/>
</dbReference>
<dbReference type="SUPFAM" id="SSF53223">
    <property type="entry name" value="Aminoacid dehydrogenase-like, N-terminal domain"/>
    <property type="match status" value="1"/>
</dbReference>
<dbReference type="SUPFAM" id="SSF51735">
    <property type="entry name" value="NAD(P)-binding Rossmann-fold domains"/>
    <property type="match status" value="1"/>
</dbReference>
<gene>
    <name evidence="1" type="primary">folD1</name>
    <name type="ordered locus">Dgeo_0514</name>
</gene>
<evidence type="ECO:0000255" key="1">
    <source>
        <dbReference type="HAMAP-Rule" id="MF_01576"/>
    </source>
</evidence>
<comment type="function">
    <text evidence="1">Catalyzes the oxidation of 5,10-methylenetetrahydrofolate to 5,10-methenyltetrahydrofolate and then the hydrolysis of 5,10-methenyltetrahydrofolate to 10-formyltetrahydrofolate.</text>
</comment>
<comment type="catalytic activity">
    <reaction evidence="1">
        <text>(6R)-5,10-methylene-5,6,7,8-tetrahydrofolate + NADP(+) = (6R)-5,10-methenyltetrahydrofolate + NADPH</text>
        <dbReference type="Rhea" id="RHEA:22812"/>
        <dbReference type="ChEBI" id="CHEBI:15636"/>
        <dbReference type="ChEBI" id="CHEBI:57455"/>
        <dbReference type="ChEBI" id="CHEBI:57783"/>
        <dbReference type="ChEBI" id="CHEBI:58349"/>
        <dbReference type="EC" id="1.5.1.5"/>
    </reaction>
</comment>
<comment type="catalytic activity">
    <reaction evidence="1">
        <text>(6R)-5,10-methenyltetrahydrofolate + H2O = (6R)-10-formyltetrahydrofolate + H(+)</text>
        <dbReference type="Rhea" id="RHEA:23700"/>
        <dbReference type="ChEBI" id="CHEBI:15377"/>
        <dbReference type="ChEBI" id="CHEBI:15378"/>
        <dbReference type="ChEBI" id="CHEBI:57455"/>
        <dbReference type="ChEBI" id="CHEBI:195366"/>
        <dbReference type="EC" id="3.5.4.9"/>
    </reaction>
</comment>
<comment type="pathway">
    <text evidence="1">One-carbon metabolism; tetrahydrofolate interconversion.</text>
</comment>
<comment type="subunit">
    <text evidence="1">Homodimer.</text>
</comment>
<comment type="similarity">
    <text evidence="1">Belongs to the tetrahydrofolate dehydrogenase/cyclohydrolase family.</text>
</comment>
<feature type="chain" id="PRO_0000268332" description="Bifunctional protein FolD 1">
    <location>
        <begin position="1"/>
        <end position="288"/>
    </location>
</feature>
<feature type="binding site" evidence="1">
    <location>
        <begin position="170"/>
        <end position="172"/>
    </location>
    <ligand>
        <name>NADP(+)</name>
        <dbReference type="ChEBI" id="CHEBI:58349"/>
    </ligand>
</feature>
<feature type="binding site" evidence="1">
    <location>
        <position position="236"/>
    </location>
    <ligand>
        <name>NADP(+)</name>
        <dbReference type="ChEBI" id="CHEBI:58349"/>
    </ligand>
</feature>
<keyword id="KW-0028">Amino-acid biosynthesis</keyword>
<keyword id="KW-0368">Histidine biosynthesis</keyword>
<keyword id="KW-0378">Hydrolase</keyword>
<keyword id="KW-0486">Methionine biosynthesis</keyword>
<keyword id="KW-0511">Multifunctional enzyme</keyword>
<keyword id="KW-0521">NADP</keyword>
<keyword id="KW-0554">One-carbon metabolism</keyword>
<keyword id="KW-0560">Oxidoreductase</keyword>
<keyword id="KW-0658">Purine biosynthesis</keyword>
<proteinExistence type="inferred from homology"/>
<name>FOLD1_DEIGD</name>
<protein>
    <recommendedName>
        <fullName evidence="1">Bifunctional protein FolD 1</fullName>
    </recommendedName>
    <domain>
        <recommendedName>
            <fullName evidence="1">Methylenetetrahydrofolate dehydrogenase</fullName>
            <ecNumber evidence="1">1.5.1.5</ecNumber>
        </recommendedName>
    </domain>
    <domain>
        <recommendedName>
            <fullName evidence="1">Methenyltetrahydrofolate cyclohydrolase</fullName>
            <ecNumber evidence="1">3.5.4.9</ecNumber>
        </recommendedName>
    </domain>
</protein>
<reference key="1">
    <citation type="submission" date="2006-04" db="EMBL/GenBank/DDBJ databases">
        <title>Complete sequence of chromosome of Deinococcus geothermalis DSM 11300.</title>
        <authorList>
            <person name="Copeland A."/>
            <person name="Lucas S."/>
            <person name="Lapidus A."/>
            <person name="Barry K."/>
            <person name="Detter J.C."/>
            <person name="Glavina del Rio T."/>
            <person name="Hammon N."/>
            <person name="Israni S."/>
            <person name="Dalin E."/>
            <person name="Tice H."/>
            <person name="Pitluck S."/>
            <person name="Brettin T."/>
            <person name="Bruce D."/>
            <person name="Han C."/>
            <person name="Tapia R."/>
            <person name="Saunders E."/>
            <person name="Gilna P."/>
            <person name="Schmutz J."/>
            <person name="Larimer F."/>
            <person name="Land M."/>
            <person name="Hauser L."/>
            <person name="Kyrpides N."/>
            <person name="Kim E."/>
            <person name="Daly M.J."/>
            <person name="Fredrickson J.K."/>
            <person name="Makarova K.S."/>
            <person name="Gaidamakova E.K."/>
            <person name="Zhai M."/>
            <person name="Richardson P."/>
        </authorList>
    </citation>
    <scope>NUCLEOTIDE SEQUENCE [LARGE SCALE GENOMIC DNA]</scope>
    <source>
        <strain>DSM 11300 / CIP 105573 / AG-3a</strain>
    </source>
</reference>
<sequence>MTKAQLFGKPLADDVTRGVRAALKEWAGAEPGFQPHLVSVLASEDEASRVYVHSKARQAERLGVRFTARDLGADAKQDELHAVLQALSADADVHGVVLELPLAPGLDADAALRHIAPCKDVEGLTPANLALIAAGREAEALLPPTPRSVRFLLREVLGDDLRGRRVAVIGPGRTVGRPLTFMLNNRGVTVTLCNECTRDLRDVLAPQDAVVVAVGHAGLLRPEQVQPHHVVIDAGINVTPGGVVGDAVPDLPVRAQTPVPGGVGPLTSALMYQNLVRAVKLQRGERVE</sequence>
<accession>Q1J118</accession>
<organism>
    <name type="scientific">Deinococcus geothermalis (strain DSM 11300 / CIP 105573 / AG-3a)</name>
    <dbReference type="NCBI Taxonomy" id="319795"/>
    <lineage>
        <taxon>Bacteria</taxon>
        <taxon>Thermotogati</taxon>
        <taxon>Deinococcota</taxon>
        <taxon>Deinococci</taxon>
        <taxon>Deinococcales</taxon>
        <taxon>Deinococcaceae</taxon>
        <taxon>Deinococcus</taxon>
    </lineage>
</organism>